<evidence type="ECO:0000255" key="1">
    <source>
        <dbReference type="HAMAP-Rule" id="MF_01023"/>
    </source>
</evidence>
<organism>
    <name type="scientific">Haloarcula marismortui (strain ATCC 43049 / DSM 3752 / JCM 8966 / VKM B-1809)</name>
    <name type="common">Halobacterium marismortui</name>
    <dbReference type="NCBI Taxonomy" id="272569"/>
    <lineage>
        <taxon>Archaea</taxon>
        <taxon>Methanobacteriati</taxon>
        <taxon>Methanobacteriota</taxon>
        <taxon>Stenosarchaea group</taxon>
        <taxon>Halobacteria</taxon>
        <taxon>Halobacteriales</taxon>
        <taxon>Haloarculaceae</taxon>
        <taxon>Haloarcula</taxon>
    </lineage>
</organism>
<keyword id="KW-0028">Amino-acid biosynthesis</keyword>
<keyword id="KW-0032">Aminotransferase</keyword>
<keyword id="KW-0368">Histidine biosynthesis</keyword>
<keyword id="KW-0663">Pyridoxal phosphate</keyword>
<keyword id="KW-1185">Reference proteome</keyword>
<keyword id="KW-0808">Transferase</keyword>
<gene>
    <name evidence="1" type="primary">hisC</name>
    <name type="ordered locus">rrnAC0529</name>
</gene>
<reference key="1">
    <citation type="journal article" date="2004" name="Genome Res.">
        <title>Genome sequence of Haloarcula marismortui: a halophilic archaeon from the Dead Sea.</title>
        <authorList>
            <person name="Baliga N.S."/>
            <person name="Bonneau R."/>
            <person name="Facciotti M.T."/>
            <person name="Pan M."/>
            <person name="Glusman G."/>
            <person name="Deutsch E.W."/>
            <person name="Shannon P."/>
            <person name="Chiu Y."/>
            <person name="Weng R.S."/>
            <person name="Gan R.R."/>
            <person name="Hung P."/>
            <person name="Date S.V."/>
            <person name="Marcotte E."/>
            <person name="Hood L."/>
            <person name="Ng W.V."/>
        </authorList>
    </citation>
    <scope>NUCLEOTIDE SEQUENCE [LARGE SCALE GENOMIC DNA]</scope>
    <source>
        <strain>ATCC 43049 / DSM 3752 / JCM 8966 / VKM B-1809</strain>
    </source>
</reference>
<dbReference type="EC" id="2.6.1.9" evidence="1"/>
<dbReference type="EMBL" id="AY596297">
    <property type="protein sequence ID" value="AAV45549.1"/>
    <property type="molecule type" value="Genomic_DNA"/>
</dbReference>
<dbReference type="RefSeq" id="WP_011223072.1">
    <property type="nucleotide sequence ID" value="NC_006396.1"/>
</dbReference>
<dbReference type="SMR" id="Q5V4K3"/>
<dbReference type="STRING" id="272569.rrnAC0529"/>
<dbReference type="PaxDb" id="272569-rrnAC0529"/>
<dbReference type="EnsemblBacteria" id="AAV45549">
    <property type="protein sequence ID" value="AAV45549"/>
    <property type="gene ID" value="rrnAC0529"/>
</dbReference>
<dbReference type="GeneID" id="40151587"/>
<dbReference type="KEGG" id="hma:rrnAC0529"/>
<dbReference type="PATRIC" id="fig|272569.17.peg.1295"/>
<dbReference type="eggNOG" id="arCOG04273">
    <property type="taxonomic scope" value="Archaea"/>
</dbReference>
<dbReference type="HOGENOM" id="CLU_017584_3_3_2"/>
<dbReference type="UniPathway" id="UPA00031">
    <property type="reaction ID" value="UER00012"/>
</dbReference>
<dbReference type="Proteomes" id="UP000001169">
    <property type="component" value="Chromosome I"/>
</dbReference>
<dbReference type="GO" id="GO:0004400">
    <property type="term" value="F:histidinol-phosphate transaminase activity"/>
    <property type="evidence" value="ECO:0007669"/>
    <property type="project" value="UniProtKB-UniRule"/>
</dbReference>
<dbReference type="GO" id="GO:0030170">
    <property type="term" value="F:pyridoxal phosphate binding"/>
    <property type="evidence" value="ECO:0007669"/>
    <property type="project" value="InterPro"/>
</dbReference>
<dbReference type="GO" id="GO:0000105">
    <property type="term" value="P:L-histidine biosynthetic process"/>
    <property type="evidence" value="ECO:0007669"/>
    <property type="project" value="UniProtKB-UniRule"/>
</dbReference>
<dbReference type="CDD" id="cd00609">
    <property type="entry name" value="AAT_like"/>
    <property type="match status" value="1"/>
</dbReference>
<dbReference type="Gene3D" id="3.90.1150.10">
    <property type="entry name" value="Aspartate Aminotransferase, domain 1"/>
    <property type="match status" value="1"/>
</dbReference>
<dbReference type="Gene3D" id="3.40.640.10">
    <property type="entry name" value="Type I PLP-dependent aspartate aminotransferase-like (Major domain)"/>
    <property type="match status" value="1"/>
</dbReference>
<dbReference type="HAMAP" id="MF_01023">
    <property type="entry name" value="HisC_aminotrans_2"/>
    <property type="match status" value="1"/>
</dbReference>
<dbReference type="InterPro" id="IPR001917">
    <property type="entry name" value="Aminotrans_II_pyridoxalP_BS"/>
</dbReference>
<dbReference type="InterPro" id="IPR004839">
    <property type="entry name" value="Aminotransferase_I/II_large"/>
</dbReference>
<dbReference type="InterPro" id="IPR005861">
    <property type="entry name" value="HisP_aminotrans"/>
</dbReference>
<dbReference type="InterPro" id="IPR050106">
    <property type="entry name" value="HistidinolP_aminotransfase"/>
</dbReference>
<dbReference type="InterPro" id="IPR015424">
    <property type="entry name" value="PyrdxlP-dep_Trfase"/>
</dbReference>
<dbReference type="InterPro" id="IPR015421">
    <property type="entry name" value="PyrdxlP-dep_Trfase_major"/>
</dbReference>
<dbReference type="InterPro" id="IPR015422">
    <property type="entry name" value="PyrdxlP-dep_Trfase_small"/>
</dbReference>
<dbReference type="NCBIfam" id="TIGR01141">
    <property type="entry name" value="hisC"/>
    <property type="match status" value="1"/>
</dbReference>
<dbReference type="PANTHER" id="PTHR43643:SF6">
    <property type="entry name" value="HISTIDINOL-PHOSPHATE AMINOTRANSFERASE"/>
    <property type="match status" value="1"/>
</dbReference>
<dbReference type="PANTHER" id="PTHR43643">
    <property type="entry name" value="HISTIDINOL-PHOSPHATE AMINOTRANSFERASE 2"/>
    <property type="match status" value="1"/>
</dbReference>
<dbReference type="Pfam" id="PF00155">
    <property type="entry name" value="Aminotran_1_2"/>
    <property type="match status" value="1"/>
</dbReference>
<dbReference type="SUPFAM" id="SSF53383">
    <property type="entry name" value="PLP-dependent transferases"/>
    <property type="match status" value="1"/>
</dbReference>
<dbReference type="PROSITE" id="PS00599">
    <property type="entry name" value="AA_TRANSFER_CLASS_2"/>
    <property type="match status" value="1"/>
</dbReference>
<comment type="catalytic activity">
    <reaction evidence="1">
        <text>L-histidinol phosphate + 2-oxoglutarate = 3-(imidazol-4-yl)-2-oxopropyl phosphate + L-glutamate</text>
        <dbReference type="Rhea" id="RHEA:23744"/>
        <dbReference type="ChEBI" id="CHEBI:16810"/>
        <dbReference type="ChEBI" id="CHEBI:29985"/>
        <dbReference type="ChEBI" id="CHEBI:57766"/>
        <dbReference type="ChEBI" id="CHEBI:57980"/>
        <dbReference type="EC" id="2.6.1.9"/>
    </reaction>
</comment>
<comment type="cofactor">
    <cofactor evidence="1">
        <name>pyridoxal 5'-phosphate</name>
        <dbReference type="ChEBI" id="CHEBI:597326"/>
    </cofactor>
</comment>
<comment type="pathway">
    <text evidence="1">Amino-acid biosynthesis; L-histidine biosynthesis; L-histidine from 5-phospho-alpha-D-ribose 1-diphosphate: step 7/9.</text>
</comment>
<comment type="similarity">
    <text evidence="1">Belongs to the class-II pyridoxal-phosphate-dependent aminotransferase family. Histidinol-phosphate aminotransferase subfamily.</text>
</comment>
<feature type="chain" id="PRO_0000153492" description="Histidinol-phosphate aminotransferase">
    <location>
        <begin position="1"/>
        <end position="360"/>
    </location>
</feature>
<feature type="modified residue" description="N6-(pyridoxal phosphate)lysine" evidence="1">
    <location>
        <position position="222"/>
    </location>
</feature>
<accession>Q5V4K3</accession>
<protein>
    <recommendedName>
        <fullName evidence="1">Histidinol-phosphate aminotransferase</fullName>
        <ecNumber evidence="1">2.6.1.9</ecNumber>
    </recommendedName>
    <alternativeName>
        <fullName evidence="1">Imidazole acetol-phosphate transaminase</fullName>
    </alternativeName>
</protein>
<proteinExistence type="inferred from homology"/>
<name>HIS8_HALMA</name>
<sequence>MEPRDLSAHTVYRAGRGIEEVARELGLDPDDMVKLASNENMFGPSPDAVEAIRGSAERMHSYPKASHADLVDELADMWDVTPEQVWLSNGGDGALDCLARAMLDPGQDVLVPSPGFAYYAMSARYHHGEVNEYTLSKADDFAQTADTVLKDYDGERIVYLTSPHNPTGAEFTTDAVRTIAEETDEQTLVVVDEAYGEFTEKPSKRPLLSDRDDVALLRTFSKAYGLAGIRLGYAVVPEDWADAYARINTPFSASELACRAGLAALDDDEHVERSVDTAAWAREYLSAELDAPTWDSAGNFILAEVGDASAIADAAQERGVIIRDCSSFGLPECIRITCGTREDTERAVSVLNEVIEEVKA</sequence>